<proteinExistence type="evidence at protein level"/>
<evidence type="ECO:0000256" key="1">
    <source>
        <dbReference type="SAM" id="MobiDB-lite"/>
    </source>
</evidence>
<evidence type="ECO:0000269" key="2">
    <source>
    </source>
</evidence>
<evidence type="ECO:0000269" key="3">
    <source>
    </source>
</evidence>
<evidence type="ECO:0000269" key="4">
    <source>
    </source>
</evidence>
<evidence type="ECO:0000269" key="5">
    <source>
    </source>
</evidence>
<evidence type="ECO:0000269" key="6">
    <source>
    </source>
</evidence>
<evidence type="ECO:0000269" key="7">
    <source>
    </source>
</evidence>
<evidence type="ECO:0000303" key="8">
    <source>
    </source>
</evidence>
<evidence type="ECO:0000303" key="9">
    <source ref="2"/>
</evidence>
<evidence type="ECO:0000305" key="10"/>
<evidence type="ECO:0007744" key="11">
    <source>
    </source>
</evidence>
<evidence type="ECO:0007744" key="12">
    <source>
    </source>
</evidence>
<evidence type="ECO:0007744" key="13">
    <source>
    </source>
</evidence>
<evidence type="ECO:0007744" key="14">
    <source>
    </source>
</evidence>
<evidence type="ECO:0007744" key="15">
    <source>
    </source>
</evidence>
<evidence type="ECO:0007744" key="16">
    <source>
    </source>
</evidence>
<evidence type="ECO:0007829" key="17">
    <source>
        <dbReference type="PDB" id="4CB8"/>
    </source>
</evidence>
<evidence type="ECO:0007829" key="18">
    <source>
        <dbReference type="PDB" id="4HM9"/>
    </source>
</evidence>
<evidence type="ECO:0007829" key="19">
    <source>
        <dbReference type="PDB" id="4HNM"/>
    </source>
</evidence>
<evidence type="ECO:0007829" key="20">
    <source>
        <dbReference type="PDB" id="4MFU"/>
    </source>
</evidence>
<evidence type="ECO:0007829" key="21">
    <source>
        <dbReference type="PDB" id="4MFV"/>
    </source>
</evidence>
<keyword id="KW-0002">3D-structure</keyword>
<keyword id="KW-0007">Acetylation</keyword>
<keyword id="KW-1064">Adaptive immunity</keyword>
<keyword id="KW-0025">Alternative splicing</keyword>
<keyword id="KW-0175">Coiled coil</keyword>
<keyword id="KW-0963">Cytoplasm</keyword>
<keyword id="KW-0225">Disease variant</keyword>
<keyword id="KW-0391">Immunity</keyword>
<keyword id="KW-0507">mRNA processing</keyword>
<keyword id="KW-0508">mRNA splicing</keyword>
<keyword id="KW-0539">Nucleus</keyword>
<keyword id="KW-0597">Phosphoprotein</keyword>
<keyword id="KW-1267">Proteomics identification</keyword>
<keyword id="KW-1185">Reference proteome</keyword>
<keyword id="KW-0677">Repeat</keyword>
<keyword id="KW-0747">Spliceosome</keyword>
<dbReference type="EMBL" id="AF239607">
    <property type="protein sequence ID" value="AAL69567.1"/>
    <property type="molecule type" value="mRNA"/>
</dbReference>
<dbReference type="EMBL" id="AF367471">
    <property type="protein sequence ID" value="AAK53407.1"/>
    <property type="molecule type" value="mRNA"/>
</dbReference>
<dbReference type="EMBL" id="AF370431">
    <property type="protein sequence ID" value="AAQ15267.1"/>
    <property type="status" value="ALT_FRAME"/>
    <property type="molecule type" value="mRNA"/>
</dbReference>
<dbReference type="EMBL" id="AK074663">
    <property type="protein sequence ID" value="BAC11121.1"/>
    <property type="molecule type" value="mRNA"/>
</dbReference>
<dbReference type="EMBL" id="AK293420">
    <property type="protein sequence ID" value="BAG56927.1"/>
    <property type="molecule type" value="mRNA"/>
</dbReference>
<dbReference type="EMBL" id="AK024761">
    <property type="protein sequence ID" value="BAB14992.1"/>
    <property type="status" value="ALT_INIT"/>
    <property type="molecule type" value="mRNA"/>
</dbReference>
<dbReference type="EMBL" id="AL118499">
    <property type="status" value="NOT_ANNOTATED_CDS"/>
    <property type="molecule type" value="Genomic_DNA"/>
</dbReference>
<dbReference type="EMBL" id="AL109964">
    <property type="status" value="NOT_ANNOTATED_CDS"/>
    <property type="molecule type" value="Genomic_DNA"/>
</dbReference>
<dbReference type="EMBL" id="AL023804">
    <property type="status" value="NOT_ANNOTATED_CDS"/>
    <property type="molecule type" value="Genomic_DNA"/>
</dbReference>
<dbReference type="EMBL" id="BC022802">
    <property type="protein sequence ID" value="AAH22802.1"/>
    <property type="molecule type" value="mRNA"/>
</dbReference>
<dbReference type="EMBL" id="BC121005">
    <property type="protein sequence ID" value="AAI21006.1"/>
    <property type="molecule type" value="mRNA"/>
</dbReference>
<dbReference type="EMBL" id="BC121006">
    <property type="protein sequence ID" value="AAI21007.1"/>
    <property type="molecule type" value="mRNA"/>
</dbReference>
<dbReference type="EMBL" id="AK222592">
    <property type="protein sequence ID" value="BAD96312.1"/>
    <property type="molecule type" value="mRNA"/>
</dbReference>
<dbReference type="CCDS" id="CCDS13298.1">
    <molecule id="Q8WYA6-1"/>
</dbReference>
<dbReference type="CCDS" id="CCDS63269.1">
    <molecule id="Q8WYA6-4"/>
</dbReference>
<dbReference type="RefSeq" id="NP_001268424.1">
    <molecule id="Q8WYA6-4"/>
    <property type="nucleotide sequence ID" value="NM_001281495.2"/>
</dbReference>
<dbReference type="RefSeq" id="NP_110517.2">
    <molecule id="Q8WYA6-1"/>
    <property type="nucleotide sequence ID" value="NM_030877.4"/>
</dbReference>
<dbReference type="RefSeq" id="XP_011527219.1">
    <property type="nucleotide sequence ID" value="XM_011528917.2"/>
</dbReference>
<dbReference type="RefSeq" id="XP_024307715.1">
    <molecule id="Q8WYA6-4"/>
    <property type="nucleotide sequence ID" value="XM_024451947.2"/>
</dbReference>
<dbReference type="RefSeq" id="XP_054179696.1">
    <molecule id="Q8WYA6-4"/>
    <property type="nucleotide sequence ID" value="XM_054323721.1"/>
</dbReference>
<dbReference type="PDB" id="4CB8">
    <property type="method" value="X-ray"/>
    <property type="resolution" value="2.90 A"/>
    <property type="chains" value="A=77-563"/>
</dbReference>
<dbReference type="PDB" id="4CB9">
    <property type="method" value="X-ray"/>
    <property type="resolution" value="3.00 A"/>
    <property type="chains" value="A=1-563"/>
</dbReference>
<dbReference type="PDB" id="4CBA">
    <property type="method" value="X-ray"/>
    <property type="resolution" value="3.10 A"/>
    <property type="chains" value="A=77-563"/>
</dbReference>
<dbReference type="PDB" id="4HM9">
    <property type="method" value="X-ray"/>
    <property type="resolution" value="3.10 A"/>
    <property type="chains" value="A=1-563"/>
</dbReference>
<dbReference type="PDB" id="4HNM">
    <property type="method" value="X-ray"/>
    <property type="resolution" value="2.90 A"/>
    <property type="chains" value="A=75-563"/>
</dbReference>
<dbReference type="PDB" id="4MFU">
    <property type="method" value="X-ray"/>
    <property type="resolution" value="2.74 A"/>
    <property type="chains" value="A=77-563"/>
</dbReference>
<dbReference type="PDB" id="4MFV">
    <property type="method" value="X-ray"/>
    <property type="resolution" value="2.92 A"/>
    <property type="chains" value="A/B=33-563"/>
</dbReference>
<dbReference type="PDB" id="7ABI">
    <property type="method" value="EM"/>
    <property type="resolution" value="8.00 A"/>
    <property type="chains" value="S=1-563"/>
</dbReference>
<dbReference type="PDBsum" id="4CB8"/>
<dbReference type="PDBsum" id="4CB9"/>
<dbReference type="PDBsum" id="4CBA"/>
<dbReference type="PDBsum" id="4HM9"/>
<dbReference type="PDBsum" id="4HNM"/>
<dbReference type="PDBsum" id="4MFU"/>
<dbReference type="PDBsum" id="4MFV"/>
<dbReference type="PDBsum" id="7ABI"/>
<dbReference type="EMDB" id="EMD-11697"/>
<dbReference type="SMR" id="Q8WYA6"/>
<dbReference type="BioGRID" id="121123">
    <property type="interactions" value="236"/>
</dbReference>
<dbReference type="ComplexPortal" id="CPX-5824">
    <property type="entry name" value="PRP19-CDC5L complex"/>
</dbReference>
<dbReference type="CORUM" id="Q8WYA6"/>
<dbReference type="FunCoup" id="Q8WYA6">
    <property type="interactions" value="4029"/>
</dbReference>
<dbReference type="IntAct" id="Q8WYA6">
    <property type="interactions" value="82"/>
</dbReference>
<dbReference type="MINT" id="Q8WYA6"/>
<dbReference type="STRING" id="9606.ENSP00000355050"/>
<dbReference type="GlyGen" id="Q8WYA6">
    <property type="glycosylation" value="2 sites, 1 O-linked glycan (2 sites)"/>
</dbReference>
<dbReference type="iPTMnet" id="Q8WYA6"/>
<dbReference type="PhosphoSitePlus" id="Q8WYA6"/>
<dbReference type="SwissPalm" id="Q8WYA6"/>
<dbReference type="BioMuta" id="CTNNBL1"/>
<dbReference type="DMDM" id="29840792"/>
<dbReference type="jPOST" id="Q8WYA6"/>
<dbReference type="MassIVE" id="Q8WYA6"/>
<dbReference type="PaxDb" id="9606-ENSP00000355050"/>
<dbReference type="PeptideAtlas" id="Q8WYA6"/>
<dbReference type="ProteomicsDB" id="75151">
    <molecule id="Q8WYA6-1"/>
</dbReference>
<dbReference type="ProteomicsDB" id="75152">
    <molecule id="Q8WYA6-2"/>
</dbReference>
<dbReference type="ProteomicsDB" id="75153">
    <molecule id="Q8WYA6-3"/>
</dbReference>
<dbReference type="Pumba" id="Q8WYA6"/>
<dbReference type="Antibodypedia" id="750">
    <property type="antibodies" value="331 antibodies from 35 providers"/>
</dbReference>
<dbReference type="CPTC" id="Q8WYA6">
    <property type="antibodies" value="1 antibody"/>
</dbReference>
<dbReference type="DNASU" id="56259"/>
<dbReference type="Ensembl" id="ENST00000361383.11">
    <molecule id="Q8WYA6-1"/>
    <property type="protein sequence ID" value="ENSP00000355050.6"/>
    <property type="gene ID" value="ENSG00000132792.21"/>
</dbReference>
<dbReference type="Ensembl" id="ENST00000373469.1">
    <molecule id="Q8WYA6-3"/>
    <property type="protein sequence ID" value="ENSP00000362568.1"/>
    <property type="gene ID" value="ENSG00000132792.21"/>
</dbReference>
<dbReference type="Ensembl" id="ENST00000373473.5">
    <molecule id="Q8WYA6-2"/>
    <property type="protein sequence ID" value="ENSP00000362572.1"/>
    <property type="gene ID" value="ENSG00000132792.21"/>
</dbReference>
<dbReference type="Ensembl" id="ENST00000628103.2">
    <molecule id="Q8WYA6-4"/>
    <property type="protein sequence ID" value="ENSP00000487198.1"/>
    <property type="gene ID" value="ENSG00000132792.21"/>
</dbReference>
<dbReference type="GeneID" id="56259"/>
<dbReference type="KEGG" id="hsa:56259"/>
<dbReference type="MANE-Select" id="ENST00000361383.11">
    <property type="protein sequence ID" value="ENSP00000355050.6"/>
    <property type="RefSeq nucleotide sequence ID" value="NM_030877.5"/>
    <property type="RefSeq protein sequence ID" value="NP_110517.2"/>
</dbReference>
<dbReference type="UCSC" id="uc002xhh.4">
    <molecule id="Q8WYA6-1"/>
    <property type="organism name" value="human"/>
</dbReference>
<dbReference type="AGR" id="HGNC:15879"/>
<dbReference type="CTD" id="56259"/>
<dbReference type="DisGeNET" id="56259"/>
<dbReference type="GeneCards" id="CTNNBL1"/>
<dbReference type="HGNC" id="HGNC:15879">
    <property type="gene designation" value="CTNNBL1"/>
</dbReference>
<dbReference type="HPA" id="ENSG00000132792">
    <property type="expression patterns" value="Low tissue specificity"/>
</dbReference>
<dbReference type="MalaCards" id="CTNNBL1"/>
<dbReference type="MIM" id="611537">
    <property type="type" value="gene"/>
</dbReference>
<dbReference type="MIM" id="619846">
    <property type="type" value="phenotype"/>
</dbReference>
<dbReference type="neXtProt" id="NX_Q8WYA6"/>
<dbReference type="OpenTargets" id="ENSG00000132792"/>
<dbReference type="PharmGKB" id="PA27015"/>
<dbReference type="VEuPathDB" id="HostDB:ENSG00000132792"/>
<dbReference type="eggNOG" id="KOG2734">
    <property type="taxonomic scope" value="Eukaryota"/>
</dbReference>
<dbReference type="GeneTree" id="ENSGT00390000006931"/>
<dbReference type="HOGENOM" id="CLU_017098_2_1_1"/>
<dbReference type="InParanoid" id="Q8WYA6"/>
<dbReference type="OMA" id="TDWREQE"/>
<dbReference type="OrthoDB" id="1898821at2759"/>
<dbReference type="PAN-GO" id="Q8WYA6">
    <property type="GO annotations" value="1 GO annotation based on evolutionary models"/>
</dbReference>
<dbReference type="PhylomeDB" id="Q8WYA6"/>
<dbReference type="TreeFam" id="TF314294"/>
<dbReference type="PathwayCommons" id="Q8WYA6"/>
<dbReference type="Reactome" id="R-HSA-72163">
    <property type="pathway name" value="mRNA Splicing - Major Pathway"/>
</dbReference>
<dbReference type="SignaLink" id="Q8WYA6"/>
<dbReference type="SIGNOR" id="Q8WYA6"/>
<dbReference type="BioGRID-ORCS" id="56259">
    <property type="hits" value="719 hits in 1167 CRISPR screens"/>
</dbReference>
<dbReference type="CD-CODE" id="804901D1">
    <property type="entry name" value="Nuclear speckle"/>
</dbReference>
<dbReference type="CD-CODE" id="91857CE7">
    <property type="entry name" value="Nucleolus"/>
</dbReference>
<dbReference type="ChiTaRS" id="CTNNBL1">
    <property type="organism name" value="human"/>
</dbReference>
<dbReference type="EvolutionaryTrace" id="Q8WYA6"/>
<dbReference type="GeneWiki" id="CTNNBL1"/>
<dbReference type="GenomeRNAi" id="56259"/>
<dbReference type="Pharos" id="Q8WYA6">
    <property type="development level" value="Tbio"/>
</dbReference>
<dbReference type="PRO" id="PR:Q8WYA6"/>
<dbReference type="Proteomes" id="UP000005640">
    <property type="component" value="Chromosome 20"/>
</dbReference>
<dbReference type="RNAct" id="Q8WYA6">
    <property type="molecule type" value="protein"/>
</dbReference>
<dbReference type="Bgee" id="ENSG00000132792">
    <property type="expression patterns" value="Expressed in left testis and 200 other cell types or tissues"/>
</dbReference>
<dbReference type="ExpressionAtlas" id="Q8WYA6">
    <property type="expression patterns" value="baseline and differential"/>
</dbReference>
<dbReference type="GO" id="GO:0005813">
    <property type="term" value="C:centrosome"/>
    <property type="evidence" value="ECO:0000314"/>
    <property type="project" value="HPA"/>
</dbReference>
<dbReference type="GO" id="GO:0005829">
    <property type="term" value="C:cytosol"/>
    <property type="evidence" value="ECO:0000314"/>
    <property type="project" value="HPA"/>
</dbReference>
<dbReference type="GO" id="GO:0016020">
    <property type="term" value="C:membrane"/>
    <property type="evidence" value="ECO:0007005"/>
    <property type="project" value="UniProtKB"/>
</dbReference>
<dbReference type="GO" id="GO:0005654">
    <property type="term" value="C:nucleoplasm"/>
    <property type="evidence" value="ECO:0000314"/>
    <property type="project" value="HPA"/>
</dbReference>
<dbReference type="GO" id="GO:0005634">
    <property type="term" value="C:nucleus"/>
    <property type="evidence" value="ECO:0000314"/>
    <property type="project" value="UniProtKB"/>
</dbReference>
<dbReference type="GO" id="GO:0000974">
    <property type="term" value="C:Prp19 complex"/>
    <property type="evidence" value="ECO:0000314"/>
    <property type="project" value="UniProtKB"/>
</dbReference>
<dbReference type="GO" id="GO:0005681">
    <property type="term" value="C:spliceosomal complex"/>
    <property type="evidence" value="ECO:0000314"/>
    <property type="project" value="UniProtKB"/>
</dbReference>
<dbReference type="GO" id="GO:0019899">
    <property type="term" value="F:enzyme binding"/>
    <property type="evidence" value="ECO:0000353"/>
    <property type="project" value="UniProtKB"/>
</dbReference>
<dbReference type="GO" id="GO:0002250">
    <property type="term" value="P:adaptive immune response"/>
    <property type="evidence" value="ECO:0007669"/>
    <property type="project" value="UniProtKB-KW"/>
</dbReference>
<dbReference type="GO" id="GO:0000398">
    <property type="term" value="P:mRNA splicing, via spliceosome"/>
    <property type="evidence" value="ECO:0000303"/>
    <property type="project" value="ComplexPortal"/>
</dbReference>
<dbReference type="GO" id="GO:0043065">
    <property type="term" value="P:positive regulation of apoptotic process"/>
    <property type="evidence" value="ECO:0000314"/>
    <property type="project" value="UniProtKB"/>
</dbReference>
<dbReference type="GO" id="GO:0016445">
    <property type="term" value="P:somatic diversification of immunoglobulins"/>
    <property type="evidence" value="ECO:0000315"/>
    <property type="project" value="UniProtKB"/>
</dbReference>
<dbReference type="FunFam" id="1.25.10.10:FF:001136">
    <property type="entry name" value="Beta-catenin-like protein 1"/>
    <property type="match status" value="1"/>
</dbReference>
<dbReference type="Gene3D" id="1.25.10.10">
    <property type="entry name" value="Leucine-rich Repeat Variant"/>
    <property type="match status" value="1"/>
</dbReference>
<dbReference type="InterPro" id="IPR011989">
    <property type="entry name" value="ARM-like"/>
</dbReference>
<dbReference type="InterPro" id="IPR016024">
    <property type="entry name" value="ARM-type_fold"/>
</dbReference>
<dbReference type="InterPro" id="IPR039678">
    <property type="entry name" value="CTNNBL1"/>
</dbReference>
<dbReference type="InterPro" id="IPR013180">
    <property type="entry name" value="CTNNBL1_N"/>
</dbReference>
<dbReference type="PANTHER" id="PTHR14978:SF0">
    <property type="entry name" value="BETA-CATENIN-LIKE PROTEIN 1"/>
    <property type="match status" value="1"/>
</dbReference>
<dbReference type="PANTHER" id="PTHR14978">
    <property type="entry name" value="BETA-CATENIN-LIKE PROTEIN 1 NUCLEAR ASSOCIATED PROTEIN"/>
    <property type="match status" value="1"/>
</dbReference>
<dbReference type="Pfam" id="PF08216">
    <property type="entry name" value="CTNNBL"/>
    <property type="match status" value="1"/>
</dbReference>
<dbReference type="SMART" id="SM01156">
    <property type="entry name" value="DUF1716"/>
    <property type="match status" value="1"/>
</dbReference>
<dbReference type="SUPFAM" id="SSF48371">
    <property type="entry name" value="ARM repeat"/>
    <property type="match status" value="1"/>
</dbReference>
<sequence>MDVGELLSYQPNRGTKRPRDDEEEEQKMRRKQTGTRERGRYREEEMTVVEEADDDKKRLLQIIDRDGEEEEEEEEPLDESSVKKMILTFEKRSYKNQELRIKFPDNPEKFMESELDLNDIIQEMHVVATMPDLYHLLVELNAVQSLLGLLGHDNTDVSIAVVDLLQELTDIDTLHESEEGAEVLIDALVDGQVVALLVQNLERLDESVKEEADGVHNTLAIVENMAEFRPEMCTEGAQQGLLQWLLKRLKAKMPFDANKLYCSEVLAILLQDNDENRELLGELDGIDVLLQQLSVFKRHNPSTAEEQEMMENLFDSLCSCLMLSSNRERFLKGEGLQLMNLMLREKKISRSSALKVLDHAMIGPEGTDNCHKFVDILGLRTIFPLFMKSPRKIKKVGTTEKEHEEHVCSILASLLRNLRGQQRTRLLNKFTENDSEKVDRLMELHFKYLGAMQVADKKIEGEKHDMVRRGEIIDNDTEEEFYLRRLDAGLFVLQHICYIMAEICNANVPQIRQRVHQILNMRGSSIKIVRHIIKEYAENIGDGRSPEFRENEQKRILGLLENF</sequence>
<name>CTBL1_HUMAN</name>
<protein>
    <recommendedName>
        <fullName>Beta-catenin-like protein 1</fullName>
    </recommendedName>
    <alternativeName>
        <fullName>Nuclear-associated protein</fullName>
        <shortName>NAP</shortName>
    </alternativeName>
    <alternativeName>
        <fullName>Testis development protein NYD-SP19</fullName>
    </alternativeName>
</protein>
<reference key="1">
    <citation type="journal article" date="2003" name="Genomics">
        <title>Sequence, gene structure, and expression pattern of CTNNBL1, a minor-class intron-containing gene - evidence for a role in apoptosis.</title>
        <authorList>
            <person name="Jabbour L.S."/>
            <person name="Welter J.F."/>
            <person name="Kollar J."/>
            <person name="Hering T.M."/>
        </authorList>
    </citation>
    <scope>NUCLEOTIDE SEQUENCE [MRNA] (ISOFORM 1)</scope>
    <scope>TISSUE SPECIFICITY</scope>
    <scope>SUBCELLULAR LOCATION</scope>
    <scope>POSSIBLE FUNCTION</scope>
</reference>
<reference key="2">
    <citation type="submission" date="2001-04" db="EMBL/GenBank/DDBJ databases">
        <title>A new testis development gene NYD-SP19 from human testes.</title>
        <authorList>
            <person name="Sha J.H."/>
            <person name="Li J.M."/>
            <person name="Zhou Z.M."/>
        </authorList>
    </citation>
    <scope>NUCLEOTIDE SEQUENCE [MRNA] (ISOFORM 2)</scope>
    <source>
        <tissue>Testis</tissue>
    </source>
</reference>
<reference key="3">
    <citation type="journal article" date="2004" name="Proc. Natl. Acad. Sci. U.S.A.">
        <title>Large-scale cDNA transfection screening for genes related to cancer development and progression.</title>
        <authorList>
            <person name="Wan D."/>
            <person name="Gong Y."/>
            <person name="Qin W."/>
            <person name="Zhang P."/>
            <person name="Li J."/>
            <person name="Wei L."/>
            <person name="Zhou X."/>
            <person name="Li H."/>
            <person name="Qiu X."/>
            <person name="Zhong F."/>
            <person name="He L."/>
            <person name="Yu J."/>
            <person name="Yao G."/>
            <person name="Jiang H."/>
            <person name="Qian L."/>
            <person name="Yu Y."/>
            <person name="Shu H."/>
            <person name="Chen X."/>
            <person name="Xu H."/>
            <person name="Guo M."/>
            <person name="Pan Z."/>
            <person name="Chen Y."/>
            <person name="Ge C."/>
            <person name="Yang S."/>
            <person name="Gu J."/>
        </authorList>
    </citation>
    <scope>NUCLEOTIDE SEQUENCE [LARGE SCALE MRNA] (ISOFORM 1)</scope>
</reference>
<reference key="4">
    <citation type="journal article" date="2004" name="Nat. Genet.">
        <title>Complete sequencing and characterization of 21,243 full-length human cDNAs.</title>
        <authorList>
            <person name="Ota T."/>
            <person name="Suzuki Y."/>
            <person name="Nishikawa T."/>
            <person name="Otsuki T."/>
            <person name="Sugiyama T."/>
            <person name="Irie R."/>
            <person name="Wakamatsu A."/>
            <person name="Hayashi K."/>
            <person name="Sato H."/>
            <person name="Nagai K."/>
            <person name="Kimura K."/>
            <person name="Makita H."/>
            <person name="Sekine M."/>
            <person name="Obayashi M."/>
            <person name="Nishi T."/>
            <person name="Shibahara T."/>
            <person name="Tanaka T."/>
            <person name="Ishii S."/>
            <person name="Yamamoto J."/>
            <person name="Saito K."/>
            <person name="Kawai Y."/>
            <person name="Isono Y."/>
            <person name="Nakamura Y."/>
            <person name="Nagahari K."/>
            <person name="Murakami K."/>
            <person name="Yasuda T."/>
            <person name="Iwayanagi T."/>
            <person name="Wagatsuma M."/>
            <person name="Shiratori A."/>
            <person name="Sudo H."/>
            <person name="Hosoiri T."/>
            <person name="Kaku Y."/>
            <person name="Kodaira H."/>
            <person name="Kondo H."/>
            <person name="Sugawara M."/>
            <person name="Takahashi M."/>
            <person name="Kanda K."/>
            <person name="Yokoi T."/>
            <person name="Furuya T."/>
            <person name="Kikkawa E."/>
            <person name="Omura Y."/>
            <person name="Abe K."/>
            <person name="Kamihara K."/>
            <person name="Katsuta N."/>
            <person name="Sato K."/>
            <person name="Tanikawa M."/>
            <person name="Yamazaki M."/>
            <person name="Ninomiya K."/>
            <person name="Ishibashi T."/>
            <person name="Yamashita H."/>
            <person name="Murakawa K."/>
            <person name="Fujimori K."/>
            <person name="Tanai H."/>
            <person name="Kimata M."/>
            <person name="Watanabe M."/>
            <person name="Hiraoka S."/>
            <person name="Chiba Y."/>
            <person name="Ishida S."/>
            <person name="Ono Y."/>
            <person name="Takiguchi S."/>
            <person name="Watanabe S."/>
            <person name="Yosida M."/>
            <person name="Hotuta T."/>
            <person name="Kusano J."/>
            <person name="Kanehori K."/>
            <person name="Takahashi-Fujii A."/>
            <person name="Hara H."/>
            <person name="Tanase T.-O."/>
            <person name="Nomura Y."/>
            <person name="Togiya S."/>
            <person name="Komai F."/>
            <person name="Hara R."/>
            <person name="Takeuchi K."/>
            <person name="Arita M."/>
            <person name="Imose N."/>
            <person name="Musashino K."/>
            <person name="Yuuki H."/>
            <person name="Oshima A."/>
            <person name="Sasaki N."/>
            <person name="Aotsuka S."/>
            <person name="Yoshikawa Y."/>
            <person name="Matsunawa H."/>
            <person name="Ichihara T."/>
            <person name="Shiohata N."/>
            <person name="Sano S."/>
            <person name="Moriya S."/>
            <person name="Momiyama H."/>
            <person name="Satoh N."/>
            <person name="Takami S."/>
            <person name="Terashima Y."/>
            <person name="Suzuki O."/>
            <person name="Nakagawa S."/>
            <person name="Senoh A."/>
            <person name="Mizoguchi H."/>
            <person name="Goto Y."/>
            <person name="Shimizu F."/>
            <person name="Wakebe H."/>
            <person name="Hishigaki H."/>
            <person name="Watanabe T."/>
            <person name="Sugiyama A."/>
            <person name="Takemoto M."/>
            <person name="Kawakami B."/>
            <person name="Yamazaki M."/>
            <person name="Watanabe K."/>
            <person name="Kumagai A."/>
            <person name="Itakura S."/>
            <person name="Fukuzumi Y."/>
            <person name="Fujimori Y."/>
            <person name="Komiyama M."/>
            <person name="Tashiro H."/>
            <person name="Tanigami A."/>
            <person name="Fujiwara T."/>
            <person name="Ono T."/>
            <person name="Yamada K."/>
            <person name="Fujii Y."/>
            <person name="Ozaki K."/>
            <person name="Hirao M."/>
            <person name="Ohmori Y."/>
            <person name="Kawabata A."/>
            <person name="Hikiji T."/>
            <person name="Kobatake N."/>
            <person name="Inagaki H."/>
            <person name="Ikema Y."/>
            <person name="Okamoto S."/>
            <person name="Okitani R."/>
            <person name="Kawakami T."/>
            <person name="Noguchi S."/>
            <person name="Itoh T."/>
            <person name="Shigeta K."/>
            <person name="Senba T."/>
            <person name="Matsumura K."/>
            <person name="Nakajima Y."/>
            <person name="Mizuno T."/>
            <person name="Morinaga M."/>
            <person name="Sasaki M."/>
            <person name="Togashi T."/>
            <person name="Oyama M."/>
            <person name="Hata H."/>
            <person name="Watanabe M."/>
            <person name="Komatsu T."/>
            <person name="Mizushima-Sugano J."/>
            <person name="Satoh T."/>
            <person name="Shirai Y."/>
            <person name="Takahashi Y."/>
            <person name="Nakagawa K."/>
            <person name="Okumura K."/>
            <person name="Nagase T."/>
            <person name="Nomura N."/>
            <person name="Kikuchi H."/>
            <person name="Masuho Y."/>
            <person name="Yamashita R."/>
            <person name="Nakai K."/>
            <person name="Yada T."/>
            <person name="Nakamura Y."/>
            <person name="Ohara O."/>
            <person name="Isogai T."/>
            <person name="Sugano S."/>
        </authorList>
    </citation>
    <scope>NUCLEOTIDE SEQUENCE [LARGE SCALE MRNA] (ISOFORMS 1 AND 4)</scope>
    <source>
        <tissue>Aortic smooth muscle</tissue>
        <tissue>Mammary gland</tissue>
    </source>
</reference>
<reference key="5">
    <citation type="journal article" date="2001" name="Nature">
        <title>The DNA sequence and comparative analysis of human chromosome 20.</title>
        <authorList>
            <person name="Deloukas P."/>
            <person name="Matthews L.H."/>
            <person name="Ashurst J.L."/>
            <person name="Burton J."/>
            <person name="Gilbert J.G.R."/>
            <person name="Jones M."/>
            <person name="Stavrides G."/>
            <person name="Almeida J.P."/>
            <person name="Babbage A.K."/>
            <person name="Bagguley C.L."/>
            <person name="Bailey J."/>
            <person name="Barlow K.F."/>
            <person name="Bates K.N."/>
            <person name="Beard L.M."/>
            <person name="Beare D.M."/>
            <person name="Beasley O.P."/>
            <person name="Bird C.P."/>
            <person name="Blakey S.E."/>
            <person name="Bridgeman A.M."/>
            <person name="Brown A.J."/>
            <person name="Buck D."/>
            <person name="Burrill W.D."/>
            <person name="Butler A.P."/>
            <person name="Carder C."/>
            <person name="Carter N.P."/>
            <person name="Chapman J.C."/>
            <person name="Clamp M."/>
            <person name="Clark G."/>
            <person name="Clark L.N."/>
            <person name="Clark S.Y."/>
            <person name="Clee C.M."/>
            <person name="Clegg S."/>
            <person name="Cobley V.E."/>
            <person name="Collier R.E."/>
            <person name="Connor R.E."/>
            <person name="Corby N.R."/>
            <person name="Coulson A."/>
            <person name="Coville G.J."/>
            <person name="Deadman R."/>
            <person name="Dhami P.D."/>
            <person name="Dunn M."/>
            <person name="Ellington A.G."/>
            <person name="Frankland J.A."/>
            <person name="Fraser A."/>
            <person name="French L."/>
            <person name="Garner P."/>
            <person name="Grafham D.V."/>
            <person name="Griffiths C."/>
            <person name="Griffiths M.N.D."/>
            <person name="Gwilliam R."/>
            <person name="Hall R.E."/>
            <person name="Hammond S."/>
            <person name="Harley J.L."/>
            <person name="Heath P.D."/>
            <person name="Ho S."/>
            <person name="Holden J.L."/>
            <person name="Howden P.J."/>
            <person name="Huckle E."/>
            <person name="Hunt A.R."/>
            <person name="Hunt S.E."/>
            <person name="Jekosch K."/>
            <person name="Johnson C.M."/>
            <person name="Johnson D."/>
            <person name="Kay M.P."/>
            <person name="Kimberley A.M."/>
            <person name="King A."/>
            <person name="Knights A."/>
            <person name="Laird G.K."/>
            <person name="Lawlor S."/>
            <person name="Lehvaeslaiho M.H."/>
            <person name="Leversha M.A."/>
            <person name="Lloyd C."/>
            <person name="Lloyd D.M."/>
            <person name="Lovell J.D."/>
            <person name="Marsh V.L."/>
            <person name="Martin S.L."/>
            <person name="McConnachie L.J."/>
            <person name="McLay K."/>
            <person name="McMurray A.A."/>
            <person name="Milne S.A."/>
            <person name="Mistry D."/>
            <person name="Moore M.J.F."/>
            <person name="Mullikin J.C."/>
            <person name="Nickerson T."/>
            <person name="Oliver K."/>
            <person name="Parker A."/>
            <person name="Patel R."/>
            <person name="Pearce T.A.V."/>
            <person name="Peck A.I."/>
            <person name="Phillimore B.J.C.T."/>
            <person name="Prathalingam S.R."/>
            <person name="Plumb R.W."/>
            <person name="Ramsay H."/>
            <person name="Rice C.M."/>
            <person name="Ross M.T."/>
            <person name="Scott C.E."/>
            <person name="Sehra H.K."/>
            <person name="Shownkeen R."/>
            <person name="Sims S."/>
            <person name="Skuce C.D."/>
            <person name="Smith M.L."/>
            <person name="Soderlund C."/>
            <person name="Steward C.A."/>
            <person name="Sulston J.E."/>
            <person name="Swann R.M."/>
            <person name="Sycamore N."/>
            <person name="Taylor R."/>
            <person name="Tee L."/>
            <person name="Thomas D.W."/>
            <person name="Thorpe A."/>
            <person name="Tracey A."/>
            <person name="Tromans A.C."/>
            <person name="Vaudin M."/>
            <person name="Wall M."/>
            <person name="Wallis J.M."/>
            <person name="Whitehead S.L."/>
            <person name="Whittaker P."/>
            <person name="Willey D.L."/>
            <person name="Williams L."/>
            <person name="Williams S.A."/>
            <person name="Wilming L."/>
            <person name="Wray P.W."/>
            <person name="Hubbard T."/>
            <person name="Durbin R.M."/>
            <person name="Bentley D.R."/>
            <person name="Beck S."/>
            <person name="Rogers J."/>
        </authorList>
    </citation>
    <scope>NUCLEOTIDE SEQUENCE [LARGE SCALE GENOMIC DNA]</scope>
</reference>
<reference key="6">
    <citation type="journal article" date="2004" name="Genome Res.">
        <title>The status, quality, and expansion of the NIH full-length cDNA project: the Mammalian Gene Collection (MGC).</title>
        <authorList>
            <consortium name="The MGC Project Team"/>
        </authorList>
    </citation>
    <scope>NUCLEOTIDE SEQUENCE [LARGE SCALE MRNA] (ISOFORM 1)</scope>
    <source>
        <tissue>Skin</tissue>
    </source>
</reference>
<reference key="7">
    <citation type="submission" date="2005-04" db="EMBL/GenBank/DDBJ databases">
        <authorList>
            <person name="Suzuki Y."/>
            <person name="Sugano S."/>
            <person name="Totoki Y."/>
            <person name="Toyoda A."/>
            <person name="Takeda T."/>
            <person name="Sakaki Y."/>
            <person name="Tanaka A."/>
            <person name="Yokoyama S."/>
        </authorList>
    </citation>
    <scope>NUCLEOTIDE SEQUENCE [LARGE SCALE MRNA] OF 327-563</scope>
    <source>
        <tissue>Coronary artery</tissue>
    </source>
</reference>
<reference key="8">
    <citation type="journal article" date="2008" name="Mol. Cell">
        <title>Interaction between antibody-diversification enzyme AID and spliceosome-associated factor CTNNBL1.</title>
        <authorList>
            <person name="Conticello S.G."/>
            <person name="Ganesh K."/>
            <person name="Xue K."/>
            <person name="Lu M."/>
            <person name="Rada C."/>
            <person name="Neuberger M.S."/>
        </authorList>
    </citation>
    <scope>INTERACTION WITH AICDA</scope>
    <scope>SUBCELLULAR LOCATION</scope>
    <scope>POSSIBLE FUNCTION</scope>
    <scope>MUTAGENESIS OF 16-LYS--LYS-33</scope>
</reference>
<reference key="9">
    <citation type="journal article" date="2008" name="Proc. Natl. Acad. Sci. U.S.A.">
        <title>A quantitative atlas of mitotic phosphorylation.</title>
        <authorList>
            <person name="Dephoure N."/>
            <person name="Zhou C."/>
            <person name="Villen J."/>
            <person name="Beausoleil S.A."/>
            <person name="Bakalarski C.E."/>
            <person name="Elledge S.J."/>
            <person name="Gygi S.P."/>
        </authorList>
    </citation>
    <scope>PHOSPHORYLATION [LARGE SCALE ANALYSIS] AT SER-389</scope>
    <scope>IDENTIFICATION BY MASS SPECTROMETRY [LARGE SCALE ANALYSIS]</scope>
    <source>
        <tissue>Cervix carcinoma</tissue>
    </source>
</reference>
<reference key="10">
    <citation type="journal article" date="2009" name="Science">
        <title>Lysine acetylation targets protein complexes and co-regulates major cellular functions.</title>
        <authorList>
            <person name="Choudhary C."/>
            <person name="Kumar C."/>
            <person name="Gnad F."/>
            <person name="Nielsen M.L."/>
            <person name="Rehman M."/>
            <person name="Walther T.C."/>
            <person name="Olsen J.V."/>
            <person name="Mann M."/>
        </authorList>
    </citation>
    <scope>ACETYLATION [LARGE SCALE ANALYSIS] AT LYS-91</scope>
    <scope>IDENTIFICATION BY MASS SPECTROMETRY [LARGE SCALE ANALYSIS]</scope>
</reference>
<reference key="11">
    <citation type="journal article" date="2010" name="Mol. Cell. Biol.">
        <title>Molecular architecture of the human Prp19/CDC5L complex.</title>
        <authorList>
            <person name="Grote M."/>
            <person name="Wolf E."/>
            <person name="Will C.L."/>
            <person name="Lemm I."/>
            <person name="Agafonov D.E."/>
            <person name="Schomburg A."/>
            <person name="Fischle W."/>
            <person name="Urlaub H."/>
            <person name="Luhrmann R."/>
        </authorList>
    </citation>
    <scope>IDENTIFICATION AS A COMPONENT OF THE PRP19-CDC5L COMPLEX</scope>
    <scope>SUBCELLULAR LOCATION</scope>
    <scope>INTERACTION WITH CWC15 AND CDC5L</scope>
</reference>
<reference key="12">
    <citation type="journal article" date="2011" name="BMC Syst. Biol.">
        <title>Initial characterization of the human central proteome.</title>
        <authorList>
            <person name="Burkard T.R."/>
            <person name="Planyavsky M."/>
            <person name="Kaupe I."/>
            <person name="Breitwieser F.P."/>
            <person name="Buerckstuemmer T."/>
            <person name="Bennett K.L."/>
            <person name="Superti-Furga G."/>
            <person name="Colinge J."/>
        </authorList>
    </citation>
    <scope>IDENTIFICATION BY MASS SPECTROMETRY [LARGE SCALE ANALYSIS]</scope>
</reference>
<reference key="13">
    <citation type="journal article" date="2011" name="J. Biol. Chem.">
        <title>CTNNBL1 is a novel nuclear localization sequence-binding protein that recognizes RNA-splicing factors CDC5L and Prp31.</title>
        <authorList>
            <person name="Ganesh K."/>
            <person name="Adam S."/>
            <person name="Taylor B."/>
            <person name="Simpson P."/>
            <person name="Rada C."/>
            <person name="Neuberger M."/>
        </authorList>
    </citation>
    <scope>INTERACTION WITH AICDA; CDC5L; PRPF31; KPNA1 AND KPNA2</scope>
    <scope>SUBCELLULAR LOCATION</scope>
</reference>
<reference key="14">
    <citation type="journal article" date="2012" name="Mol. Cell. Proteomics">
        <title>Comparative large-scale characterisation of plant vs. mammal proteins reveals similar and idiosyncratic N-alpha acetylation features.</title>
        <authorList>
            <person name="Bienvenut W.V."/>
            <person name="Sumpton D."/>
            <person name="Martinez A."/>
            <person name="Lilla S."/>
            <person name="Espagne C."/>
            <person name="Meinnel T."/>
            <person name="Giglione C."/>
        </authorList>
    </citation>
    <scope>ACETYLATION [LARGE SCALE ANALYSIS] AT MET-1</scope>
    <scope>IDENTIFICATION BY MASS SPECTROMETRY [LARGE SCALE ANALYSIS]</scope>
</reference>
<reference key="15">
    <citation type="journal article" date="2012" name="Proc. Natl. Acad. Sci. U.S.A.">
        <title>N-terminal acetylome analyses and functional insights of the N-terminal acetyltransferase NatB.</title>
        <authorList>
            <person name="Van Damme P."/>
            <person name="Lasa M."/>
            <person name="Polevoda B."/>
            <person name="Gazquez C."/>
            <person name="Elosegui-Artola A."/>
            <person name="Kim D.S."/>
            <person name="De Juan-Pardo E."/>
            <person name="Demeyer K."/>
            <person name="Hole K."/>
            <person name="Larrea E."/>
            <person name="Timmerman E."/>
            <person name="Prieto J."/>
            <person name="Arnesen T."/>
            <person name="Sherman F."/>
            <person name="Gevaert K."/>
            <person name="Aldabe R."/>
        </authorList>
    </citation>
    <scope>ACETYLATION [LARGE SCALE ANALYSIS] AT MET-1</scope>
    <scope>IDENTIFICATION BY MASS SPECTROMETRY [LARGE SCALE ANALYSIS]</scope>
</reference>
<reference key="16">
    <citation type="journal article" date="2013" name="J. Proteome Res.">
        <title>Toward a comprehensive characterization of a human cancer cell phosphoproteome.</title>
        <authorList>
            <person name="Zhou H."/>
            <person name="Di Palma S."/>
            <person name="Preisinger C."/>
            <person name="Peng M."/>
            <person name="Polat A.N."/>
            <person name="Heck A.J."/>
            <person name="Mohammed S."/>
        </authorList>
    </citation>
    <scope>PHOSPHORYLATION [LARGE SCALE ANALYSIS] AT SER-545</scope>
    <scope>IDENTIFICATION BY MASS SPECTROMETRY [LARGE SCALE ANALYSIS]</scope>
    <source>
        <tissue>Cervix carcinoma</tissue>
        <tissue>Erythroleukemia</tissue>
    </source>
</reference>
<reference key="17">
    <citation type="journal article" date="2014" name="J. Proteomics">
        <title>An enzyme assisted RP-RPLC approach for in-depth analysis of human liver phosphoproteome.</title>
        <authorList>
            <person name="Bian Y."/>
            <person name="Song C."/>
            <person name="Cheng K."/>
            <person name="Dong M."/>
            <person name="Wang F."/>
            <person name="Huang J."/>
            <person name="Sun D."/>
            <person name="Wang L."/>
            <person name="Ye M."/>
            <person name="Zou H."/>
        </authorList>
    </citation>
    <scope>PHOSPHORYLATION [LARGE SCALE ANALYSIS] AT SER-545</scope>
    <scope>IDENTIFICATION BY MASS SPECTROMETRY [LARGE SCALE ANALYSIS]</scope>
    <source>
        <tissue>Liver</tissue>
    </source>
</reference>
<reference key="18">
    <citation type="journal article" date="2013" name="Acta Crystallogr. D">
        <title>The structure of full-length human CTNNBL1 reveals a distinct member of the armadillo-repeat protein family.</title>
        <authorList>
            <person name="Huang X."/>
            <person name="Wang G."/>
            <person name="Wu Y."/>
            <person name="Du Z."/>
        </authorList>
    </citation>
    <scope>X-RAY CRYSTALLOGRAPHY (3.1 ANGSTROMS)</scope>
    <scope>ARM REPEATS</scope>
</reference>
<reference key="19">
    <citation type="journal article" date="2014" name="FEBS Lett.">
        <title>Structural and mutational analysis reveals that CTNNBL1 binds NLSs in a manner distinct from that of its closest armadillo-relative, karyopherin alpha.</title>
        <authorList>
            <person name="Ganesh K."/>
            <person name="van Maldegem F."/>
            <person name="Telerman S.B."/>
            <person name="Simpson P."/>
            <person name="Johnson C.M."/>
            <person name="Williams R.L."/>
            <person name="Neuberger M.S."/>
            <person name="Rada C."/>
        </authorList>
    </citation>
    <scope>X-RAY CRYSTALLOGRAPHY (3.0 ANGSTROMS)</scope>
    <scope>NUCLEAR EXPORT SIGNAL</scope>
    <scope>HEAT REPEATS</scope>
    <scope>MUTAGENESIS OF 521-MET--PHE-563</scope>
    <scope>COILED-COIL</scope>
</reference>
<reference key="20">
    <citation type="journal article" date="2020" name="J. Clin. Invest.">
        <title>Disease-associated CTNNBL1 mutation impairs somatic hypermutation by decreasing nuclear AID.</title>
        <authorList>
            <person name="Kuhny M."/>
            <person name="Forbes L.R."/>
            <person name="Cakan E."/>
            <person name="Vega-Loza A."/>
            <person name="Kostiuk V."/>
            <person name="Dinesh R.K."/>
            <person name="Glauzy S."/>
            <person name="Stray-Pedersen A."/>
            <person name="Pezzi A.E."/>
            <person name="Hanson I.C."/>
            <person name="Vargas-Hernandez A."/>
            <person name="Xu M.L."/>
            <person name="Coban-Akdemir Z.H."/>
            <person name="Jhangiani S.N."/>
            <person name="Muzny D.M."/>
            <person name="Gibbs R.A."/>
            <person name="Lupski J.R."/>
            <person name="Chinn I.K."/>
            <person name="Schatz D.G."/>
            <person name="Orange J.S."/>
            <person name="Meffre E."/>
        </authorList>
    </citation>
    <scope>INVOLVEMENT IN IMD9</scope>
    <scope>VARIANT IMD99 VAL-466</scope>
    <scope>FUNCTION</scope>
    <scope>INTERACTION WITH AICDA AND CDC5L</scope>
    <scope>CHARACTERIZATION OF VARIANT IMD99 VAL-466</scope>
</reference>
<accession>Q8WYA6</accession>
<accession>B4DE16</accession>
<accession>Q0VAL9</accession>
<accession>Q0VAM0</accession>
<accession>Q53HI8</accession>
<accession>Q5JWZ2</accession>
<accession>Q5JWZ3</accession>
<accession>Q5JWZ7</accession>
<accession>Q5JWZ8</accession>
<accession>Q8N454</accession>
<accession>Q8NCL2</accession>
<accession>Q8TBD6</accession>
<accession>Q96KD2</accession>
<accession>Q9H7A5</accession>
<accession>Q9NQF9</accession>
<accession>Q9NTX0</accession>
<accession>Q9Y3M7</accession>
<organism>
    <name type="scientific">Homo sapiens</name>
    <name type="common">Human</name>
    <dbReference type="NCBI Taxonomy" id="9606"/>
    <lineage>
        <taxon>Eukaryota</taxon>
        <taxon>Metazoa</taxon>
        <taxon>Chordata</taxon>
        <taxon>Craniata</taxon>
        <taxon>Vertebrata</taxon>
        <taxon>Euteleostomi</taxon>
        <taxon>Mammalia</taxon>
        <taxon>Eutheria</taxon>
        <taxon>Euarchontoglires</taxon>
        <taxon>Primates</taxon>
        <taxon>Haplorrhini</taxon>
        <taxon>Catarrhini</taxon>
        <taxon>Hominidae</taxon>
        <taxon>Homo</taxon>
    </lineage>
</organism>
<gene>
    <name type="primary">CTNNBL1</name>
    <name type="synonym">C20orf33</name>
    <name type="ORF">PP8304</name>
</gene>
<feature type="chain" id="PRO_0000079490" description="Beta-catenin-like protein 1">
    <location>
        <begin position="1"/>
        <end position="563"/>
    </location>
</feature>
<feature type="repeat" description="HEAT 1">
    <location>
        <begin position="79"/>
        <end position="129"/>
    </location>
</feature>
<feature type="repeat" description="HEAT 2">
    <location>
        <begin position="134"/>
        <end position="176"/>
    </location>
</feature>
<feature type="repeat" description="ARM 1">
    <location>
        <begin position="178"/>
        <end position="228"/>
    </location>
</feature>
<feature type="repeat" description="ARM 2">
    <location>
        <begin position="229"/>
        <end position="273"/>
    </location>
</feature>
<feature type="repeat" description="ARM 3">
    <location>
        <begin position="274"/>
        <end position="323"/>
    </location>
</feature>
<feature type="repeat" description="ARM 4">
    <location>
        <begin position="325"/>
        <end position="363"/>
    </location>
</feature>
<feature type="repeat" description="ARM 5">
    <location>
        <begin position="364"/>
        <end position="417"/>
    </location>
</feature>
<feature type="region of interest" description="Disordered" evidence="1">
    <location>
        <begin position="1"/>
        <end position="49"/>
    </location>
</feature>
<feature type="coiled-coil region" evidence="6">
    <location>
        <begin position="476"/>
        <end position="540"/>
    </location>
</feature>
<feature type="short sequence motif" description="Nuclear localization signal">
    <location>
        <begin position="16"/>
        <end position="33"/>
    </location>
</feature>
<feature type="short sequence motif" description="Nuclear export signal (NES)" evidence="10">
    <location>
        <begin position="130"/>
        <end position="140"/>
    </location>
</feature>
<feature type="compositionally biased region" description="Basic and acidic residues" evidence="1">
    <location>
        <begin position="34"/>
        <end position="45"/>
    </location>
</feature>
<feature type="modified residue" description="N-acetylmethionine" evidence="13 14">
    <location>
        <position position="1"/>
    </location>
</feature>
<feature type="modified residue" description="N6-acetyllysine" evidence="12">
    <location>
        <position position="91"/>
    </location>
</feature>
<feature type="modified residue" description="Phosphoserine" evidence="11">
    <location>
        <position position="389"/>
    </location>
</feature>
<feature type="modified residue" description="Phosphoserine" evidence="15 16">
    <location>
        <position position="545"/>
    </location>
</feature>
<feature type="splice variant" id="VSP_015182" description="In isoform 3." evidence="10">
    <location>
        <begin position="1"/>
        <end position="252"/>
    </location>
</feature>
<feature type="splice variant" id="VSP_004058" description="In isoform 2." evidence="9">
    <location>
        <begin position="1"/>
        <end position="187"/>
    </location>
</feature>
<feature type="splice variant" id="VSP_055261" description="In isoform 4." evidence="8">
    <location>
        <begin position="1"/>
        <end position="27"/>
    </location>
</feature>
<feature type="splice variant" id="VSP_004059" description="In isoform 2." evidence="9">
    <original>L</original>
    <variation>M</variation>
    <location>
        <position position="188"/>
    </location>
</feature>
<feature type="sequence variant" id="VAR_087117" description="In IMD99; when expressed in a B lymphocyte cell line, leads to decreased frequencies of somatic hypermutations, a process involved in the production of isotype-switched high-affinity antibodies, the defect that can be rescued by the wild-type protein; decrease interaction with AICDA, hence impairs AICDA nuclear localization; may decrease protein stability; no effect on interaction with CDC5L; dbSNP:rs201986512." evidence="7">
    <original>M</original>
    <variation>V</variation>
    <location>
        <position position="466"/>
    </location>
</feature>
<feature type="sequence variant" id="VAR_059638" description="In dbSNP:rs4811236.">
    <original>N</original>
    <variation>D</variation>
    <location>
        <position position="507"/>
    </location>
</feature>
<feature type="mutagenesis site" description="Nuclear and cytoplasmic localization." evidence="3">
    <location>
        <begin position="16"/>
        <end position="33"/>
    </location>
</feature>
<feature type="mutagenesis site" description="No change in NLS binding nor folding." evidence="6">
    <location>
        <begin position="521"/>
        <end position="563"/>
    </location>
</feature>
<feature type="sequence conflict" description="In Ref. 6; AAI21006." evidence="10" ref="6">
    <original>V</original>
    <variation>A</variation>
    <location>
        <position position="222"/>
    </location>
</feature>
<feature type="sequence conflict" description="In Ref. 4; BAB14992." evidence="10" ref="4">
    <original>R</original>
    <variation>L</variation>
    <location>
        <position position="329"/>
    </location>
</feature>
<feature type="sequence conflict" description="In Ref. 4; BAC11121." evidence="10" ref="4">
    <original>N</original>
    <variation>Y</variation>
    <location>
        <position position="340"/>
    </location>
</feature>
<feature type="sequence conflict" description="In Ref. 4; BAB14992 and 7; BAD96312." evidence="10" ref="4 7">
    <original>D</original>
    <variation>N</variation>
    <location>
        <position position="439"/>
    </location>
</feature>
<feature type="sequence conflict" description="In Ref. 4; BAB14992." evidence="10" ref="4">
    <original>H</original>
    <variation>Q</variation>
    <location>
        <position position="445"/>
    </location>
</feature>
<feature type="turn" evidence="18">
    <location>
        <begin position="54"/>
        <end position="56"/>
    </location>
</feature>
<feature type="helix" evidence="18">
    <location>
        <begin position="57"/>
        <end position="63"/>
    </location>
</feature>
<feature type="helix" evidence="20">
    <location>
        <begin position="81"/>
        <end position="102"/>
    </location>
</feature>
<feature type="strand" evidence="21">
    <location>
        <begin position="105"/>
        <end position="107"/>
    </location>
</feature>
<feature type="helix" evidence="20">
    <location>
        <begin position="111"/>
        <end position="125"/>
    </location>
</feature>
<feature type="turn" evidence="20">
    <location>
        <begin position="126"/>
        <end position="129"/>
    </location>
</feature>
<feature type="helix" evidence="17">
    <location>
        <begin position="131"/>
        <end position="134"/>
    </location>
</feature>
<feature type="helix" evidence="20">
    <location>
        <begin position="135"/>
        <end position="139"/>
    </location>
</feature>
<feature type="helix" evidence="20">
    <location>
        <begin position="142"/>
        <end position="149"/>
    </location>
</feature>
<feature type="helix" evidence="20">
    <location>
        <begin position="155"/>
        <end position="170"/>
    </location>
</feature>
<feature type="helix" evidence="20">
    <location>
        <begin position="171"/>
        <end position="173"/>
    </location>
</feature>
<feature type="strand" evidence="21">
    <location>
        <begin position="174"/>
        <end position="176"/>
    </location>
</feature>
<feature type="helix" evidence="20">
    <location>
        <begin position="179"/>
        <end position="190"/>
    </location>
</feature>
<feature type="helix" evidence="20">
    <location>
        <begin position="193"/>
        <end position="203"/>
    </location>
</feature>
<feature type="helix" evidence="20">
    <location>
        <begin position="209"/>
        <end position="228"/>
    </location>
</feature>
<feature type="helix" evidence="20">
    <location>
        <begin position="232"/>
        <end position="239"/>
    </location>
</feature>
<feature type="helix" evidence="20">
    <location>
        <begin position="241"/>
        <end position="250"/>
    </location>
</feature>
<feature type="helix" evidence="20">
    <location>
        <begin position="257"/>
        <end position="270"/>
    </location>
</feature>
<feature type="helix" evidence="20">
    <location>
        <begin position="274"/>
        <end position="282"/>
    </location>
</feature>
<feature type="helix" evidence="20">
    <location>
        <begin position="285"/>
        <end position="294"/>
    </location>
</feature>
<feature type="strand" evidence="20">
    <location>
        <begin position="297"/>
        <end position="299"/>
    </location>
</feature>
<feature type="helix" evidence="20">
    <location>
        <begin position="304"/>
        <end position="322"/>
    </location>
</feature>
<feature type="helix" evidence="20">
    <location>
        <begin position="325"/>
        <end position="332"/>
    </location>
</feature>
<feature type="helix" evidence="20">
    <location>
        <begin position="335"/>
        <end position="344"/>
    </location>
</feature>
<feature type="helix" evidence="20">
    <location>
        <begin position="350"/>
        <end position="361"/>
    </location>
</feature>
<feature type="helix" evidence="20">
    <location>
        <begin position="364"/>
        <end position="366"/>
    </location>
</feature>
<feature type="helix" evidence="20">
    <location>
        <begin position="367"/>
        <end position="375"/>
    </location>
</feature>
<feature type="helix" evidence="20">
    <location>
        <begin position="378"/>
        <end position="387"/>
    </location>
</feature>
<feature type="helix" evidence="17">
    <location>
        <begin position="393"/>
        <end position="396"/>
    </location>
</feature>
<feature type="helix" evidence="20">
    <location>
        <begin position="401"/>
        <end position="417"/>
    </location>
</feature>
<feature type="helix" evidence="20">
    <location>
        <begin position="420"/>
        <end position="429"/>
    </location>
</feature>
<feature type="helix" evidence="20">
    <location>
        <begin position="432"/>
        <end position="469"/>
    </location>
</feature>
<feature type="helix" evidence="20">
    <location>
        <begin position="475"/>
        <end position="487"/>
    </location>
</feature>
<feature type="helix" evidence="20">
    <location>
        <begin position="490"/>
        <end position="504"/>
    </location>
</feature>
<feature type="helix" evidence="20">
    <location>
        <begin position="509"/>
        <end position="520"/>
    </location>
</feature>
<feature type="turn" evidence="20">
    <location>
        <begin position="521"/>
        <end position="523"/>
    </location>
</feature>
<feature type="helix" evidence="20">
    <location>
        <begin position="526"/>
        <end position="539"/>
    </location>
</feature>
<feature type="strand" evidence="19">
    <location>
        <begin position="542"/>
        <end position="544"/>
    </location>
</feature>
<feature type="helix" evidence="20">
    <location>
        <begin position="546"/>
        <end position="559"/>
    </location>
</feature>
<feature type="turn" evidence="20">
    <location>
        <begin position="560"/>
        <end position="562"/>
    </location>
</feature>
<comment type="function">
    <text evidence="7">Component of the PRP19-CDC5L complex that forms an integral part of the spliceosome and is required for activating pre-mRNA splicing. Participates in AID/AICDA-mediated somatic hypermutation (SHM) and class-switch recombination (CSR), 2 processes resulting in the production of high-affinity, mutated isotype-switched antibodies (PubMed:32484799).</text>
</comment>
<comment type="subunit">
    <text evidence="3 4 5 7">Component of the PRP19-CDC5L splicing complex composed of a core complex comprising a homotetramer of PRPF19, CDC5L, PLRG1 and BCAS2, and at least three less stably associated proteins CTNNBL1, CWC15 and HSPA8. Interacts directly with CWC15 and CDC5L in the complex (PubMed:32484799). Interacts with AICDA; the interaction is important for the antibody diversification activity of AICDA (PubMed:18722174, PubMed:21385873). Interacts with PRPF31 (via its NLS). Interacts (via its N-terminal NLS) with KPNA1 and KPNA2.</text>
</comment>
<comment type="interaction">
    <interactant intactId="EBI-748128">
        <id>Q8WYA6</id>
    </interactant>
    <interactant intactId="EBI-741753">
        <id>Q00994</id>
        <label>BEX3</label>
    </interactant>
    <organismsDiffer>false</organismsDiffer>
    <experiments>3</experiments>
</comment>
<comment type="interaction">
    <interactant intactId="EBI-748128">
        <id>Q8WYA6</id>
    </interactant>
    <interactant intactId="EBI-10258233">
        <id>Q7Z7H3</id>
        <label>CATIP</label>
    </interactant>
    <organismsDiffer>false</organismsDiffer>
    <experiments>3</experiments>
</comment>
<comment type="interaction">
    <interactant intactId="EBI-748128">
        <id>Q8WYA6</id>
    </interactant>
    <interactant intactId="EBI-374880">
        <id>Q99459</id>
        <label>CDC5L</label>
    </interactant>
    <organismsDiffer>false</organismsDiffer>
    <experiments>8</experiments>
</comment>
<comment type="interaction">
    <interactant intactId="EBI-748128">
        <id>Q8WYA6</id>
    </interactant>
    <interactant intactId="EBI-5278764">
        <id>Q96GN5</id>
        <label>CDCA7L</label>
    </interactant>
    <organismsDiffer>false</organismsDiffer>
    <experiments>4</experiments>
</comment>
<comment type="interaction">
    <interactant intactId="EBI-748128">
        <id>Q8WYA6</id>
    </interactant>
    <interactant intactId="EBI-632965">
        <id>Q9NS37</id>
        <label>CREBZF</label>
    </interactant>
    <organismsDiffer>false</organismsDiffer>
    <experiments>3</experiments>
</comment>
<comment type="interaction">
    <interactant intactId="EBI-748128">
        <id>Q8WYA6</id>
    </interactant>
    <interactant intactId="EBI-2371709">
        <id>Q9P013</id>
        <label>CWC15</label>
    </interactant>
    <organismsDiffer>false</organismsDiffer>
    <experiments>9</experiments>
</comment>
<comment type="interaction">
    <interactant intactId="EBI-748128">
        <id>Q8WYA6</id>
    </interactant>
    <interactant intactId="EBI-740738">
        <id>O95751</id>
        <label>LDOC1</label>
    </interactant>
    <organismsDiffer>false</organismsDiffer>
    <experiments>4</experiments>
</comment>
<comment type="interaction">
    <interactant intactId="EBI-748128">
        <id>Q8WYA6</id>
    </interactant>
    <interactant intactId="EBI-394607">
        <id>Q9NPJ6</id>
        <label>MED4</label>
    </interactant>
    <organismsDiffer>false</organismsDiffer>
    <experiments>3</experiments>
</comment>
<comment type="interaction">
    <interactant intactId="EBI-748128">
        <id>Q8WYA6</id>
    </interactant>
    <interactant intactId="EBI-748397">
        <id>P50222</id>
        <label>MEOX2</label>
    </interactant>
    <organismsDiffer>false</organismsDiffer>
    <experiments>3</experiments>
</comment>
<comment type="interaction">
    <interactant intactId="EBI-748128">
        <id>Q8WYA6</id>
    </interactant>
    <interactant intactId="EBI-2803427">
        <id>Q9UKN5</id>
        <label>PRDM4</label>
    </interactant>
    <organismsDiffer>false</organismsDiffer>
    <experiments>3</experiments>
</comment>
<comment type="interaction">
    <interactant intactId="EBI-748128">
        <id>Q8WYA6</id>
    </interactant>
    <interactant intactId="EBI-632715">
        <id>Q13573</id>
        <label>SNW1</label>
    </interactant>
    <organismsDiffer>false</organismsDiffer>
    <experiments>2</experiments>
</comment>
<comment type="subcellular location">
    <molecule>Isoform 1</molecule>
    <subcellularLocation>
        <location>Nucleus</location>
    </subcellularLocation>
</comment>
<comment type="subcellular location">
    <molecule>Isoform 2</molecule>
    <subcellularLocation>
        <location evidence="10">Cytoplasm</location>
    </subcellularLocation>
</comment>
<comment type="alternative products">
    <event type="alternative splicing"/>
    <isoform>
        <id>Q8WYA6-1</id>
        <name>1</name>
        <sequence type="displayed"/>
    </isoform>
    <isoform>
        <id>Q8WYA6-2</id>
        <name>2</name>
        <name>NYD-SP19</name>
        <sequence type="described" ref="VSP_004058 VSP_004059"/>
    </isoform>
    <isoform>
        <id>Q8WYA6-3</id>
        <name>3</name>
        <sequence type="described" ref="VSP_015182"/>
    </isoform>
    <isoform>
        <id>Q8WYA6-4</id>
        <name>4</name>
        <sequence type="described" ref="VSP_055261"/>
    </isoform>
</comment>
<comment type="tissue specificity">
    <text evidence="2">Widely expressed with highest levels in skeletal muscle, placenta, heart, spleen, testis and thyroid.</text>
</comment>
<comment type="domain">
    <text evidence="6">The surface residues of the concave side of the superhelical ARM repeat region contribute to, but are not essential for NLS binding.</text>
</comment>
<comment type="disease" evidence="7">
    <disease id="DI-06402">
        <name>Immunodeficiency 99 with hypogammaglobulinemia and autoimmune cytopenias</name>
        <acronym>IMD99</acronym>
        <description>An autosomal recessive immunologic disorder characterized by recurrent sinopulmonary infections appearing in early childhood, B- and T-cell lymphopenia, and progressive severe hypogammaglobulinemia with decreased memory B cells. Patients may develop autoimmune cytopenias, such as thrombocytopenia, or autoimmune features, such as vitiligo.</description>
        <dbReference type="MIM" id="619846"/>
    </disease>
    <text>The disease is caused by variants affecting the gene represented in this entry.</text>
</comment>
<comment type="sequence caution" evidence="10">
    <conflict type="frameshift">
        <sequence resource="EMBL-CDS" id="AAQ15267"/>
    </conflict>
</comment>
<comment type="sequence caution" evidence="10">
    <conflict type="erroneous initiation">
        <sequence resource="EMBL-CDS" id="BAB14992"/>
    </conflict>
    <text>Truncated N-terminus.</text>
</comment>